<comment type="function">
    <text evidence="1">Catalyzes the hydrolysis of short-chain aliphatic amides to their corresponding organic acids with release of ammonia.</text>
</comment>
<comment type="function">
    <text evidence="1">Also exhibits in vitro acyl transferase activity, transferring the acyl moiety of short-chain amides to hydroxylamine to form hydroxamates.</text>
</comment>
<comment type="catalytic activity">
    <reaction evidence="1">
        <text>a monocarboxylic acid amide + H2O = a monocarboxylate + NH4(+)</text>
        <dbReference type="Rhea" id="RHEA:12020"/>
        <dbReference type="ChEBI" id="CHEBI:15377"/>
        <dbReference type="ChEBI" id="CHEBI:28938"/>
        <dbReference type="ChEBI" id="CHEBI:35757"/>
        <dbReference type="ChEBI" id="CHEBI:83628"/>
        <dbReference type="EC" id="3.5.1.4"/>
    </reaction>
</comment>
<comment type="similarity">
    <text evidence="1">Belongs to the carbon-nitrogen hydrolase superfamily. Aliphatic amidase family.</text>
</comment>
<feature type="chain" id="PRO_1000067043" description="Aliphatic amidase">
    <location>
        <begin position="1"/>
        <end position="345"/>
    </location>
</feature>
<feature type="domain" description="CN hydrolase" evidence="2">
    <location>
        <begin position="13"/>
        <end position="260"/>
    </location>
</feature>
<feature type="active site" description="Proton acceptor" evidence="1">
    <location>
        <position position="59"/>
    </location>
</feature>
<feature type="active site" description="Proton donor" evidence="1">
    <location>
        <position position="134"/>
    </location>
</feature>
<feature type="active site" description="Nucleophile" evidence="1">
    <location>
        <position position="166"/>
    </location>
</feature>
<accession>A5EDA7</accession>
<keyword id="KW-0378">Hydrolase</keyword>
<keyword id="KW-1185">Reference proteome</keyword>
<protein>
    <recommendedName>
        <fullName evidence="1">Aliphatic amidase</fullName>
        <ecNumber evidence="1">3.5.1.4</ecNumber>
    </recommendedName>
    <alternativeName>
        <fullName evidence="1">Acylamide amidohydrolase</fullName>
    </alternativeName>
</protein>
<name>AMIE_BRASB</name>
<reference key="1">
    <citation type="journal article" date="2007" name="Science">
        <title>Legumes symbioses: absence of nod genes in photosynthetic bradyrhizobia.</title>
        <authorList>
            <person name="Giraud E."/>
            <person name="Moulin L."/>
            <person name="Vallenet D."/>
            <person name="Barbe V."/>
            <person name="Cytryn E."/>
            <person name="Avarre J.-C."/>
            <person name="Jaubert M."/>
            <person name="Simon D."/>
            <person name="Cartieaux F."/>
            <person name="Prin Y."/>
            <person name="Bena G."/>
            <person name="Hannibal L."/>
            <person name="Fardoux J."/>
            <person name="Kojadinovic M."/>
            <person name="Vuillet L."/>
            <person name="Lajus A."/>
            <person name="Cruveiller S."/>
            <person name="Rouy Z."/>
            <person name="Mangenot S."/>
            <person name="Segurens B."/>
            <person name="Dossat C."/>
            <person name="Franck W.L."/>
            <person name="Chang W.-S."/>
            <person name="Saunders E."/>
            <person name="Bruce D."/>
            <person name="Richardson P."/>
            <person name="Normand P."/>
            <person name="Dreyfus B."/>
            <person name="Pignol D."/>
            <person name="Stacey G."/>
            <person name="Emerich D."/>
            <person name="Vermeglio A."/>
            <person name="Medigue C."/>
            <person name="Sadowsky M."/>
        </authorList>
    </citation>
    <scope>NUCLEOTIDE SEQUENCE [LARGE SCALE GENOMIC DNA]</scope>
    <source>
        <strain>BTAi1 / ATCC BAA-1182</strain>
    </source>
</reference>
<organism>
    <name type="scientific">Bradyrhizobium sp. (strain BTAi1 / ATCC BAA-1182)</name>
    <dbReference type="NCBI Taxonomy" id="288000"/>
    <lineage>
        <taxon>Bacteria</taxon>
        <taxon>Pseudomonadati</taxon>
        <taxon>Pseudomonadota</taxon>
        <taxon>Alphaproteobacteria</taxon>
        <taxon>Hyphomicrobiales</taxon>
        <taxon>Nitrobacteraceae</taxon>
        <taxon>Bradyrhizobium</taxon>
    </lineage>
</organism>
<dbReference type="EC" id="3.5.1.4" evidence="1"/>
<dbReference type="EMBL" id="CP000494">
    <property type="protein sequence ID" value="ABQ34151.1"/>
    <property type="molecule type" value="Genomic_DNA"/>
</dbReference>
<dbReference type="RefSeq" id="WP_012042181.1">
    <property type="nucleotide sequence ID" value="NC_009485.1"/>
</dbReference>
<dbReference type="SMR" id="A5EDA7"/>
<dbReference type="STRING" id="288000.BBta_1958"/>
<dbReference type="KEGG" id="bbt:BBta_1958"/>
<dbReference type="eggNOG" id="COG0388">
    <property type="taxonomic scope" value="Bacteria"/>
</dbReference>
<dbReference type="HOGENOM" id="CLU_071797_0_0_5"/>
<dbReference type="OrthoDB" id="9803803at2"/>
<dbReference type="Proteomes" id="UP000000246">
    <property type="component" value="Chromosome"/>
</dbReference>
<dbReference type="GO" id="GO:0004040">
    <property type="term" value="F:amidase activity"/>
    <property type="evidence" value="ECO:0007669"/>
    <property type="project" value="UniProtKB-UniRule"/>
</dbReference>
<dbReference type="CDD" id="cd07565">
    <property type="entry name" value="aliphatic_amidase"/>
    <property type="match status" value="1"/>
</dbReference>
<dbReference type="Gene3D" id="3.60.110.10">
    <property type="entry name" value="Carbon-nitrogen hydrolase"/>
    <property type="match status" value="1"/>
</dbReference>
<dbReference type="HAMAP" id="MF_01242">
    <property type="entry name" value="Aliphatic_amidase"/>
    <property type="match status" value="1"/>
</dbReference>
<dbReference type="InterPro" id="IPR050345">
    <property type="entry name" value="Aliph_Amidase/BUP"/>
</dbReference>
<dbReference type="InterPro" id="IPR023719">
    <property type="entry name" value="Aliphatic_amidase"/>
</dbReference>
<dbReference type="InterPro" id="IPR003010">
    <property type="entry name" value="C-N_Hydrolase"/>
</dbReference>
<dbReference type="InterPro" id="IPR036526">
    <property type="entry name" value="C-N_Hydrolase_sf"/>
</dbReference>
<dbReference type="NCBIfam" id="NF009802">
    <property type="entry name" value="PRK13286.1"/>
    <property type="match status" value="1"/>
</dbReference>
<dbReference type="PANTHER" id="PTHR43674:SF14">
    <property type="entry name" value="ALIPHATIC AMIDASE"/>
    <property type="match status" value="1"/>
</dbReference>
<dbReference type="PANTHER" id="PTHR43674">
    <property type="entry name" value="NITRILASE C965.09-RELATED"/>
    <property type="match status" value="1"/>
</dbReference>
<dbReference type="Pfam" id="PF00795">
    <property type="entry name" value="CN_hydrolase"/>
    <property type="match status" value="1"/>
</dbReference>
<dbReference type="SUPFAM" id="SSF56317">
    <property type="entry name" value="Carbon-nitrogen hydrolase"/>
    <property type="match status" value="1"/>
</dbReference>
<dbReference type="PROSITE" id="PS50263">
    <property type="entry name" value="CN_HYDROLASE"/>
    <property type="match status" value="1"/>
</dbReference>
<evidence type="ECO:0000255" key="1">
    <source>
        <dbReference type="HAMAP-Rule" id="MF_01242"/>
    </source>
</evidence>
<evidence type="ECO:0000255" key="2">
    <source>
        <dbReference type="PROSITE-ProRule" id="PRU00054"/>
    </source>
</evidence>
<gene>
    <name evidence="1" type="primary">amiE</name>
    <name type="ordered locus">BBta_1958</name>
</gene>
<proteinExistence type="inferred from homology"/>
<sequence length="345" mass="38387">MLHGDITSSNDTIGVAVVNYKMPRLHTKAEVLDNARKIADMIVGMKTGLPGMDLVIFPEYSTHGIMYDSKEMYETASTVPGDETEIFAEACRKAKVWGVFSLTGERHEEHPKKAPYNTLILMNDKGEIVQKYRKIMPWVPIEGWYPGNCTYVSEGPKGLKISLIICDDGNYPEIWRDCAMKGAELIVRCQGYMYPAKDQQVIMAKAMAWANNVYVAVANASGFDGVYSYFGHSAIIGFDGRTLGECGEEDYGVQYAQLSKSLIRDARKNGQSQNHLFKLVHRGYTGLINSGDGDRGVAACPYDFYAKWVADPEGTREMVESFTRSTVGTEECPIEGIPNKKVAHR</sequence>